<reference key="1">
    <citation type="journal article" date="2007" name="Genome Biol.">
        <title>Genome analysis and genome-wide proteomics of Thermococcus gammatolerans, the most radioresistant organism known amongst the Archaea.</title>
        <authorList>
            <person name="Zivanovic Y."/>
            <person name="Armengaud J."/>
            <person name="Lagorce A."/>
            <person name="Leplat C."/>
            <person name="Guerin P."/>
            <person name="Dutertre M."/>
            <person name="Anthouard V."/>
            <person name="Forterre P."/>
            <person name="Wincker P."/>
            <person name="Confalonieri F."/>
        </authorList>
    </citation>
    <scope>NUCLEOTIDE SEQUENCE [LARGE SCALE GENOMIC DNA]</scope>
    <source>
        <strain>DSM 15229 / JCM 11827 / EJ3</strain>
    </source>
</reference>
<comment type="similarity">
    <text evidence="1">Belongs to the eukaryotic ribosomal protein eL34 family.</text>
</comment>
<accession>C5A259</accession>
<name>RL34_THEGJ</name>
<keyword id="KW-1185">Reference proteome</keyword>
<keyword id="KW-0687">Ribonucleoprotein</keyword>
<keyword id="KW-0689">Ribosomal protein</keyword>
<sequence length="89" mass="10370">MKPMYRSRSWRRKYVRTPGGRTVIHFERRKPKVAHCAMCGRPLNGVPRGRPSELRKLPKTAKRPERPYPNLCPSCMRKVIKAQVRASLS</sequence>
<organism>
    <name type="scientific">Thermococcus gammatolerans (strain DSM 15229 / JCM 11827 / EJ3)</name>
    <dbReference type="NCBI Taxonomy" id="593117"/>
    <lineage>
        <taxon>Archaea</taxon>
        <taxon>Methanobacteriati</taxon>
        <taxon>Methanobacteriota</taxon>
        <taxon>Thermococci</taxon>
        <taxon>Thermococcales</taxon>
        <taxon>Thermococcaceae</taxon>
        <taxon>Thermococcus</taxon>
    </lineage>
</organism>
<evidence type="ECO:0000255" key="1">
    <source>
        <dbReference type="HAMAP-Rule" id="MF_00349"/>
    </source>
</evidence>
<evidence type="ECO:0000256" key="2">
    <source>
        <dbReference type="SAM" id="MobiDB-lite"/>
    </source>
</evidence>
<evidence type="ECO:0000305" key="3"/>
<dbReference type="EMBL" id="CP001398">
    <property type="protein sequence ID" value="ACS34478.1"/>
    <property type="molecule type" value="Genomic_DNA"/>
</dbReference>
<dbReference type="RefSeq" id="WP_015859582.1">
    <property type="nucleotide sequence ID" value="NC_012804.1"/>
</dbReference>
<dbReference type="SMR" id="C5A259"/>
<dbReference type="STRING" id="593117.TGAM_1976"/>
<dbReference type="PaxDb" id="593117-TGAM_1976"/>
<dbReference type="GeneID" id="7987033"/>
<dbReference type="KEGG" id="tga:TGAM_1976"/>
<dbReference type="PATRIC" id="fig|593117.10.peg.1986"/>
<dbReference type="eggNOG" id="arCOG04168">
    <property type="taxonomic scope" value="Archaea"/>
</dbReference>
<dbReference type="HOGENOM" id="CLU_118652_2_0_2"/>
<dbReference type="OrthoDB" id="43096at2157"/>
<dbReference type="Proteomes" id="UP000001488">
    <property type="component" value="Chromosome"/>
</dbReference>
<dbReference type="GO" id="GO:1990904">
    <property type="term" value="C:ribonucleoprotein complex"/>
    <property type="evidence" value="ECO:0007669"/>
    <property type="project" value="UniProtKB-KW"/>
</dbReference>
<dbReference type="GO" id="GO:0005840">
    <property type="term" value="C:ribosome"/>
    <property type="evidence" value="ECO:0007669"/>
    <property type="project" value="UniProtKB-KW"/>
</dbReference>
<dbReference type="GO" id="GO:0003735">
    <property type="term" value="F:structural constituent of ribosome"/>
    <property type="evidence" value="ECO:0007669"/>
    <property type="project" value="InterPro"/>
</dbReference>
<dbReference type="GO" id="GO:0006412">
    <property type="term" value="P:translation"/>
    <property type="evidence" value="ECO:0007669"/>
    <property type="project" value="UniProtKB-UniRule"/>
</dbReference>
<dbReference type="Gene3D" id="6.20.340.10">
    <property type="match status" value="1"/>
</dbReference>
<dbReference type="HAMAP" id="MF_00349">
    <property type="entry name" value="Ribosomal_eL34"/>
    <property type="match status" value="1"/>
</dbReference>
<dbReference type="InterPro" id="IPR008195">
    <property type="entry name" value="Ribosomal_eL34"/>
</dbReference>
<dbReference type="InterPro" id="IPR038562">
    <property type="entry name" value="Ribosomal_eL34_C_sf"/>
</dbReference>
<dbReference type="InterPro" id="IPR018065">
    <property type="entry name" value="Ribosomal_eL34_CS"/>
</dbReference>
<dbReference type="InterPro" id="IPR047868">
    <property type="entry name" value="Ribosomal_L34e_arc-type"/>
</dbReference>
<dbReference type="NCBIfam" id="NF003143">
    <property type="entry name" value="PRK04059.1"/>
    <property type="match status" value="1"/>
</dbReference>
<dbReference type="PANTHER" id="PTHR10759">
    <property type="entry name" value="60S RIBOSOMAL PROTEIN L34"/>
    <property type="match status" value="1"/>
</dbReference>
<dbReference type="Pfam" id="PF01199">
    <property type="entry name" value="Ribosomal_L34e"/>
    <property type="match status" value="1"/>
</dbReference>
<dbReference type="PRINTS" id="PR01250">
    <property type="entry name" value="RIBOSOMALL34"/>
</dbReference>
<dbReference type="PROSITE" id="PS01145">
    <property type="entry name" value="RIBOSOMAL_L34E"/>
    <property type="match status" value="1"/>
</dbReference>
<gene>
    <name evidence="1" type="primary">rpl34e</name>
    <name type="ordered locus">TGAM_1976</name>
</gene>
<protein>
    <recommendedName>
        <fullName evidence="1">Large ribosomal subunit protein eL34</fullName>
    </recommendedName>
    <alternativeName>
        <fullName evidence="3">50S ribosomal protein L34e</fullName>
    </alternativeName>
</protein>
<feature type="chain" id="PRO_1000205337" description="Large ribosomal subunit protein eL34">
    <location>
        <begin position="1"/>
        <end position="89"/>
    </location>
</feature>
<feature type="region of interest" description="Disordered" evidence="2">
    <location>
        <begin position="41"/>
        <end position="69"/>
    </location>
</feature>
<feature type="compositionally biased region" description="Basic and acidic residues" evidence="2">
    <location>
        <begin position="50"/>
        <end position="66"/>
    </location>
</feature>
<proteinExistence type="inferred from homology"/>